<name>XISC_NOSS1</name>
<keyword id="KW-0228">DNA excision</keyword>
<keyword id="KW-0233">DNA recombination</keyword>
<keyword id="KW-0364">Heterocyst</keyword>
<keyword id="KW-1185">Reference proteome</keyword>
<accession>Q44217</accession>
<comment type="function">
    <text>Essential for DNA excision. Site specific recombinase necessary for the excision of the 10.5 kb hupL element during heterocyst differentiation.</text>
</comment>
<comment type="similarity">
    <text evidence="2">Belongs to the XisA/XisC recombinase family.</text>
</comment>
<organism>
    <name type="scientific">Nostoc sp. (strain PCC 7120 / SAG 25.82 / UTEX 2576)</name>
    <dbReference type="NCBI Taxonomy" id="103690"/>
    <lineage>
        <taxon>Bacteria</taxon>
        <taxon>Bacillati</taxon>
        <taxon>Cyanobacteriota</taxon>
        <taxon>Cyanophyceae</taxon>
        <taxon>Nostocales</taxon>
        <taxon>Nostocaceae</taxon>
        <taxon>Nostoc</taxon>
    </lineage>
</organism>
<proteinExistence type="inferred from homology"/>
<gene>
    <name type="primary">xisC</name>
    <name type="ordered locus">alr0677</name>
</gene>
<evidence type="ECO:0000255" key="1">
    <source>
        <dbReference type="PROSITE-ProRule" id="PRU01246"/>
    </source>
</evidence>
<evidence type="ECO:0000305" key="2"/>
<sequence length="498" mass="58195">MSGQNQGNCEETYSTSTHEYANADSTDWFADMFADFEPQNTTDGSYRGTMAKIKATELQYQAVFEQKLVEANTNLKRERIRVSIKQTGNSLQLRATLPLKPGDGSLGKTKKQYDLSLGIPANLEGLKTAIEESYELGKLIARHTFEWNEKYLGIKSREKQEIKTIGELLDKFEEKYYQTRQKTITSQNTFPNYISVIKRNFPLTHLATKENFEEIINSVQGNKKNELIAVTSVFIKTFNLGFQLDVKRDNVTPAHREIPEDDKIIYSFDLFEKFALNRKNTNISDEIDTWEMWRWVYGMLATFGLRPRELFVQPDINWWMSPQNLDHTWKVNKNTKTGYREVIPFVPEWIELFDLKNPKPLKILEKKVTKIASVQNINWMRRDISRWFRKVGIEFQPYDLRHACAIRAHLQGIPIKAAADNLGHTVDEHTKTYQRWFGIENRKKAFGEVISQKSLIELQKNEILALRMENERLRLEVEKLKFSTTKNPEDCEQLYHQG</sequence>
<reference key="1">
    <citation type="journal article" date="1995" name="Proc. Natl. Acad. Sci. U.S.A.">
        <title>Programmed DNA rearrangement of a cyanobacterial hupL gene in heterocysts.</title>
        <authorList>
            <person name="Carrasco C.D."/>
            <person name="Buettner J.A."/>
            <person name="Golden J.W."/>
        </authorList>
    </citation>
    <scope>NUCLEOTIDE SEQUENCE [GENOMIC DNA]</scope>
</reference>
<reference key="2">
    <citation type="journal article" date="2001" name="DNA Res.">
        <title>Complete genomic sequence of the filamentous nitrogen-fixing cyanobacterium Anabaena sp. strain PCC 7120.</title>
        <authorList>
            <person name="Kaneko T."/>
            <person name="Nakamura Y."/>
            <person name="Wolk C.P."/>
            <person name="Kuritz T."/>
            <person name="Sasamoto S."/>
            <person name="Watanabe A."/>
            <person name="Iriguchi M."/>
            <person name="Ishikawa A."/>
            <person name="Kawashima K."/>
            <person name="Kimura T."/>
            <person name="Kishida Y."/>
            <person name="Kohara M."/>
            <person name="Matsumoto M."/>
            <person name="Matsuno A."/>
            <person name="Muraki A."/>
            <person name="Nakazaki N."/>
            <person name="Shimpo S."/>
            <person name="Sugimoto M."/>
            <person name="Takazawa M."/>
            <person name="Yamada M."/>
            <person name="Yasuda M."/>
            <person name="Tabata S."/>
        </authorList>
    </citation>
    <scope>NUCLEOTIDE SEQUENCE [LARGE SCALE GENOMIC DNA]</scope>
    <source>
        <strain>PCC 7120 / SAG 25.82 / UTEX 2576</strain>
    </source>
</reference>
<dbReference type="EMBL" id="U08014">
    <property type="protein sequence ID" value="AAC43303.1"/>
    <property type="molecule type" value="Genomic_DNA"/>
</dbReference>
<dbReference type="EMBL" id="BA000019">
    <property type="protein sequence ID" value="BAB72635.1"/>
    <property type="molecule type" value="Genomic_DNA"/>
</dbReference>
<dbReference type="PIR" id="AD1891">
    <property type="entry name" value="AD1891"/>
</dbReference>
<dbReference type="RefSeq" id="WP_010994853.1">
    <property type="nucleotide sequence ID" value="NZ_RSCN01000009.1"/>
</dbReference>
<dbReference type="STRING" id="103690.gene:10492688"/>
<dbReference type="KEGG" id="ana:alr0677"/>
<dbReference type="eggNOG" id="COG0582">
    <property type="taxonomic scope" value="Bacteria"/>
</dbReference>
<dbReference type="OrthoDB" id="421803at2"/>
<dbReference type="Proteomes" id="UP000002483">
    <property type="component" value="Chromosome"/>
</dbReference>
<dbReference type="GO" id="GO:0003677">
    <property type="term" value="F:DNA binding"/>
    <property type="evidence" value="ECO:0007669"/>
    <property type="project" value="InterPro"/>
</dbReference>
<dbReference type="GO" id="GO:0015074">
    <property type="term" value="P:DNA integration"/>
    <property type="evidence" value="ECO:0007669"/>
    <property type="project" value="InterPro"/>
</dbReference>
<dbReference type="GO" id="GO:0006310">
    <property type="term" value="P:DNA recombination"/>
    <property type="evidence" value="ECO:0007669"/>
    <property type="project" value="UniProtKB-KW"/>
</dbReference>
<dbReference type="GO" id="GO:0006281">
    <property type="term" value="P:DNA repair"/>
    <property type="evidence" value="ECO:0007669"/>
    <property type="project" value="UniProtKB-KW"/>
</dbReference>
<dbReference type="GO" id="GO:0043158">
    <property type="term" value="P:heterocyst development"/>
    <property type="evidence" value="ECO:0007669"/>
    <property type="project" value="UniProtKB-KW"/>
</dbReference>
<dbReference type="CDD" id="cd00796">
    <property type="entry name" value="INT_Rci_Hp1_C"/>
    <property type="match status" value="1"/>
</dbReference>
<dbReference type="Gene3D" id="1.10.443.10">
    <property type="entry name" value="Intergrase catalytic core"/>
    <property type="match status" value="1"/>
</dbReference>
<dbReference type="InterPro" id="IPR011010">
    <property type="entry name" value="DNA_brk_join_enz"/>
</dbReference>
<dbReference type="InterPro" id="IPR013762">
    <property type="entry name" value="Integrase-like_cat_sf"/>
</dbReference>
<dbReference type="InterPro" id="IPR002104">
    <property type="entry name" value="Integrase_catalytic"/>
</dbReference>
<dbReference type="Pfam" id="PF00589">
    <property type="entry name" value="Phage_integrase"/>
    <property type="match status" value="1"/>
</dbReference>
<dbReference type="SUPFAM" id="SSF56349">
    <property type="entry name" value="DNA breaking-rejoining enzymes"/>
    <property type="match status" value="1"/>
</dbReference>
<dbReference type="PROSITE" id="PS51898">
    <property type="entry name" value="TYR_RECOMBINASE"/>
    <property type="match status" value="1"/>
</dbReference>
<feature type="chain" id="PRO_0000066010" description="Excisase C">
    <location>
        <begin position="1"/>
        <end position="498"/>
    </location>
</feature>
<feature type="domain" description="Tyr recombinase" evidence="1">
    <location>
        <begin position="263"/>
        <end position="446"/>
    </location>
</feature>
<feature type="active site" evidence="1">
    <location>
        <position position="306"/>
    </location>
</feature>
<feature type="active site" evidence="1">
    <location>
        <position position="336"/>
    </location>
</feature>
<feature type="active site" evidence="1">
    <location>
        <position position="401"/>
    </location>
</feature>
<feature type="active site" evidence="1">
    <location>
        <position position="424"/>
    </location>
</feature>
<feature type="active site" description="O-(3'-phospho-DNA)-tyrosine intermediate" evidence="1">
    <location>
        <position position="433"/>
    </location>
</feature>
<protein>
    <recommendedName>
        <fullName>Excisase C</fullName>
    </recommendedName>
    <alternativeName>
        <fullName>HupL element site-specific recombinase</fullName>
    </alternativeName>
</protein>